<sequence>MIEVGEYKVKEGLYYTKDHEWAQVLDDGTVLVGISDYAQKELGDLAYVELPEVGKEVSKGDVLCEIESVKAVSEVYAPVSGEVIEVNEALEDSPELLNEDPYENWIAKLKPTNLEEELKELMDAQAYAEYLRSL</sequence>
<name>GCSH_THEKO</name>
<reference key="1">
    <citation type="journal article" date="2005" name="Genome Res.">
        <title>Complete genome sequence of the hyperthermophilic archaeon Thermococcus kodakaraensis KOD1 and comparison with Pyrococcus genomes.</title>
        <authorList>
            <person name="Fukui T."/>
            <person name="Atomi H."/>
            <person name="Kanai T."/>
            <person name="Matsumi R."/>
            <person name="Fujiwara S."/>
            <person name="Imanaka T."/>
        </authorList>
    </citation>
    <scope>NUCLEOTIDE SEQUENCE [LARGE SCALE GENOMIC DNA]</scope>
    <source>
        <strain>ATCC BAA-918 / JCM 12380 / KOD1</strain>
    </source>
</reference>
<feature type="chain" id="PRO_0000166278" description="Probable glycine cleavage system H protein">
    <location>
        <begin position="1"/>
        <end position="134"/>
    </location>
</feature>
<feature type="domain" description="Lipoyl-binding" evidence="2">
    <location>
        <begin position="29"/>
        <end position="110"/>
    </location>
</feature>
<feature type="modified residue" description="N6-lipoyllysine" evidence="1">
    <location>
        <position position="70"/>
    </location>
</feature>
<evidence type="ECO:0000255" key="1">
    <source>
        <dbReference type="HAMAP-Rule" id="MF_00272"/>
    </source>
</evidence>
<evidence type="ECO:0000255" key="2">
    <source>
        <dbReference type="PROSITE-ProRule" id="PRU01066"/>
    </source>
</evidence>
<gene>
    <name evidence="1" type="primary">gcvH</name>
    <name type="ordered locus">TK0150</name>
</gene>
<protein>
    <recommendedName>
        <fullName evidence="1">Probable glycine cleavage system H protein</fullName>
    </recommendedName>
</protein>
<dbReference type="EMBL" id="AP006878">
    <property type="protein sequence ID" value="BAD84339.1"/>
    <property type="molecule type" value="Genomic_DNA"/>
</dbReference>
<dbReference type="RefSeq" id="WP_011249105.1">
    <property type="nucleotide sequence ID" value="NC_006624.1"/>
</dbReference>
<dbReference type="SMR" id="Q5JFJ9"/>
<dbReference type="STRING" id="69014.TK0150"/>
<dbReference type="EnsemblBacteria" id="BAD84339">
    <property type="protein sequence ID" value="BAD84339"/>
    <property type="gene ID" value="TK0150"/>
</dbReference>
<dbReference type="GeneID" id="78446654"/>
<dbReference type="KEGG" id="tko:TK0150"/>
<dbReference type="PATRIC" id="fig|69014.16.peg.150"/>
<dbReference type="eggNOG" id="arCOG01303">
    <property type="taxonomic scope" value="Archaea"/>
</dbReference>
<dbReference type="HOGENOM" id="CLU_097408_2_1_2"/>
<dbReference type="InParanoid" id="Q5JFJ9"/>
<dbReference type="OrthoDB" id="9810at2157"/>
<dbReference type="PhylomeDB" id="Q5JFJ9"/>
<dbReference type="Proteomes" id="UP000000536">
    <property type="component" value="Chromosome"/>
</dbReference>
<dbReference type="GO" id="GO:0005960">
    <property type="term" value="C:glycine cleavage complex"/>
    <property type="evidence" value="ECO:0007669"/>
    <property type="project" value="InterPro"/>
</dbReference>
<dbReference type="GO" id="GO:0019464">
    <property type="term" value="P:glycine decarboxylation via glycine cleavage system"/>
    <property type="evidence" value="ECO:0007669"/>
    <property type="project" value="UniProtKB-UniRule"/>
</dbReference>
<dbReference type="CDD" id="cd06848">
    <property type="entry name" value="GCS_H"/>
    <property type="match status" value="1"/>
</dbReference>
<dbReference type="Gene3D" id="2.40.50.100">
    <property type="match status" value="1"/>
</dbReference>
<dbReference type="HAMAP" id="MF_00272">
    <property type="entry name" value="GcvH"/>
    <property type="match status" value="1"/>
</dbReference>
<dbReference type="InterPro" id="IPR003016">
    <property type="entry name" value="2-oxoA_DH_lipoyl-BS"/>
</dbReference>
<dbReference type="InterPro" id="IPR000089">
    <property type="entry name" value="Biotin_lipoyl"/>
</dbReference>
<dbReference type="InterPro" id="IPR002930">
    <property type="entry name" value="GCV_H"/>
</dbReference>
<dbReference type="InterPro" id="IPR033753">
    <property type="entry name" value="GCV_H/Fam206"/>
</dbReference>
<dbReference type="InterPro" id="IPR017453">
    <property type="entry name" value="GCV_H_sub"/>
</dbReference>
<dbReference type="InterPro" id="IPR011053">
    <property type="entry name" value="Single_hybrid_motif"/>
</dbReference>
<dbReference type="NCBIfam" id="TIGR00527">
    <property type="entry name" value="gcvH"/>
    <property type="match status" value="1"/>
</dbReference>
<dbReference type="NCBIfam" id="NF002270">
    <property type="entry name" value="PRK01202.1"/>
    <property type="match status" value="1"/>
</dbReference>
<dbReference type="PANTHER" id="PTHR11715">
    <property type="entry name" value="GLYCINE CLEAVAGE SYSTEM H PROTEIN"/>
    <property type="match status" value="1"/>
</dbReference>
<dbReference type="PANTHER" id="PTHR11715:SF3">
    <property type="entry name" value="GLYCINE CLEAVAGE SYSTEM H PROTEIN-RELATED"/>
    <property type="match status" value="1"/>
</dbReference>
<dbReference type="Pfam" id="PF01597">
    <property type="entry name" value="GCV_H"/>
    <property type="match status" value="1"/>
</dbReference>
<dbReference type="SUPFAM" id="SSF51230">
    <property type="entry name" value="Single hybrid motif"/>
    <property type="match status" value="1"/>
</dbReference>
<dbReference type="PROSITE" id="PS50968">
    <property type="entry name" value="BIOTINYL_LIPOYL"/>
    <property type="match status" value="1"/>
</dbReference>
<dbReference type="PROSITE" id="PS00189">
    <property type="entry name" value="LIPOYL"/>
    <property type="match status" value="1"/>
</dbReference>
<organism>
    <name type="scientific">Thermococcus kodakarensis (strain ATCC BAA-918 / JCM 12380 / KOD1)</name>
    <name type="common">Pyrococcus kodakaraensis (strain KOD1)</name>
    <dbReference type="NCBI Taxonomy" id="69014"/>
    <lineage>
        <taxon>Archaea</taxon>
        <taxon>Methanobacteriati</taxon>
        <taxon>Methanobacteriota</taxon>
        <taxon>Thermococci</taxon>
        <taxon>Thermococcales</taxon>
        <taxon>Thermococcaceae</taxon>
        <taxon>Thermococcus</taxon>
    </lineage>
</organism>
<comment type="function">
    <text evidence="1">The glycine cleavage system catalyzes the degradation of glycine. The H protein shuttles the methylamine group of glycine from the P protein to the T protein.</text>
</comment>
<comment type="cofactor">
    <cofactor evidence="1">
        <name>(R)-lipoate</name>
        <dbReference type="ChEBI" id="CHEBI:83088"/>
    </cofactor>
    <text evidence="1">Binds 1 lipoyl cofactor covalently.</text>
</comment>
<comment type="subunit">
    <text evidence="1">The glycine cleavage system is composed of four proteins: P, T, L and H.</text>
</comment>
<comment type="similarity">
    <text evidence="1">Belongs to the GcvH family.</text>
</comment>
<accession>Q5JFJ9</accession>
<keyword id="KW-0450">Lipoyl</keyword>
<keyword id="KW-1185">Reference proteome</keyword>
<proteinExistence type="inferred from homology"/>